<keyword id="KW-0028">Amino-acid biosynthesis</keyword>
<keyword id="KW-0057">Aromatic amino acid biosynthesis</keyword>
<keyword id="KW-0170">Cobalt</keyword>
<keyword id="KW-0963">Cytoplasm</keyword>
<keyword id="KW-0456">Lyase</keyword>
<keyword id="KW-0479">Metal-binding</keyword>
<keyword id="KW-0520">NAD</keyword>
<keyword id="KW-0547">Nucleotide-binding</keyword>
<keyword id="KW-0862">Zinc</keyword>
<organism>
    <name type="scientific">Bacillus cereus (strain G9842)</name>
    <dbReference type="NCBI Taxonomy" id="405531"/>
    <lineage>
        <taxon>Bacteria</taxon>
        <taxon>Bacillati</taxon>
        <taxon>Bacillota</taxon>
        <taxon>Bacilli</taxon>
        <taxon>Bacillales</taxon>
        <taxon>Bacillaceae</taxon>
        <taxon>Bacillus</taxon>
        <taxon>Bacillus cereus group</taxon>
    </lineage>
</organism>
<evidence type="ECO:0000255" key="1">
    <source>
        <dbReference type="HAMAP-Rule" id="MF_00110"/>
    </source>
</evidence>
<comment type="function">
    <text evidence="1">Catalyzes the conversion of 3-deoxy-D-arabino-heptulosonate 7-phosphate (DAHP) to dehydroquinate (DHQ).</text>
</comment>
<comment type="catalytic activity">
    <reaction evidence="1">
        <text>7-phospho-2-dehydro-3-deoxy-D-arabino-heptonate = 3-dehydroquinate + phosphate</text>
        <dbReference type="Rhea" id="RHEA:21968"/>
        <dbReference type="ChEBI" id="CHEBI:32364"/>
        <dbReference type="ChEBI" id="CHEBI:43474"/>
        <dbReference type="ChEBI" id="CHEBI:58394"/>
        <dbReference type="EC" id="4.2.3.4"/>
    </reaction>
</comment>
<comment type="cofactor">
    <cofactor evidence="1">
        <name>Co(2+)</name>
        <dbReference type="ChEBI" id="CHEBI:48828"/>
    </cofactor>
    <cofactor evidence="1">
        <name>Zn(2+)</name>
        <dbReference type="ChEBI" id="CHEBI:29105"/>
    </cofactor>
    <text evidence="1">Binds 1 divalent metal cation per subunit. Can use either Co(2+) or Zn(2+).</text>
</comment>
<comment type="cofactor">
    <cofactor evidence="1">
        <name>NAD(+)</name>
        <dbReference type="ChEBI" id="CHEBI:57540"/>
    </cofactor>
</comment>
<comment type="pathway">
    <text evidence="1">Metabolic intermediate biosynthesis; chorismate biosynthesis; chorismate from D-erythrose 4-phosphate and phosphoenolpyruvate: step 2/7.</text>
</comment>
<comment type="subcellular location">
    <subcellularLocation>
        <location evidence="1">Cytoplasm</location>
    </subcellularLocation>
</comment>
<comment type="similarity">
    <text evidence="1">Belongs to the sugar phosphate cyclases superfamily. Dehydroquinate synthase family.</text>
</comment>
<gene>
    <name evidence="1" type="primary">aroB</name>
    <name type="ordered locus">BCG9842_B3772</name>
</gene>
<feature type="chain" id="PRO_1000117472" description="3-dehydroquinate synthase">
    <location>
        <begin position="1"/>
        <end position="361"/>
    </location>
</feature>
<feature type="binding site" evidence="1">
    <location>
        <begin position="72"/>
        <end position="77"/>
    </location>
    <ligand>
        <name>NAD(+)</name>
        <dbReference type="ChEBI" id="CHEBI:57540"/>
    </ligand>
</feature>
<feature type="binding site" evidence="1">
    <location>
        <begin position="130"/>
        <end position="131"/>
    </location>
    <ligand>
        <name>NAD(+)</name>
        <dbReference type="ChEBI" id="CHEBI:57540"/>
    </ligand>
</feature>
<feature type="binding site" evidence="1">
    <location>
        <position position="142"/>
    </location>
    <ligand>
        <name>NAD(+)</name>
        <dbReference type="ChEBI" id="CHEBI:57540"/>
    </ligand>
</feature>
<feature type="binding site" evidence="1">
    <location>
        <position position="151"/>
    </location>
    <ligand>
        <name>NAD(+)</name>
        <dbReference type="ChEBI" id="CHEBI:57540"/>
    </ligand>
</feature>
<feature type="binding site" evidence="1">
    <location>
        <position position="184"/>
    </location>
    <ligand>
        <name>Zn(2+)</name>
        <dbReference type="ChEBI" id="CHEBI:29105"/>
    </ligand>
</feature>
<feature type="binding site" evidence="1">
    <location>
        <position position="247"/>
    </location>
    <ligand>
        <name>Zn(2+)</name>
        <dbReference type="ChEBI" id="CHEBI:29105"/>
    </ligand>
</feature>
<feature type="binding site" evidence="1">
    <location>
        <position position="264"/>
    </location>
    <ligand>
        <name>Zn(2+)</name>
        <dbReference type="ChEBI" id="CHEBI:29105"/>
    </ligand>
</feature>
<reference key="1">
    <citation type="submission" date="2008-10" db="EMBL/GenBank/DDBJ databases">
        <title>Genome sequence of Bacillus cereus G9842.</title>
        <authorList>
            <person name="Dodson R.J."/>
            <person name="Durkin A.S."/>
            <person name="Rosovitz M.J."/>
            <person name="Rasko D.A."/>
            <person name="Hoffmaster A."/>
            <person name="Ravel J."/>
            <person name="Sutton G."/>
        </authorList>
    </citation>
    <scope>NUCLEOTIDE SEQUENCE [LARGE SCALE GENOMIC DNA]</scope>
    <source>
        <strain>G9842</strain>
    </source>
</reference>
<dbReference type="EC" id="4.2.3.4" evidence="1"/>
<dbReference type="EMBL" id="CP001186">
    <property type="protein sequence ID" value="ACK93926.1"/>
    <property type="molecule type" value="Genomic_DNA"/>
</dbReference>
<dbReference type="RefSeq" id="WP_000526805.1">
    <property type="nucleotide sequence ID" value="NC_011772.1"/>
</dbReference>
<dbReference type="SMR" id="B7IP95"/>
<dbReference type="KEGG" id="bcg:BCG9842_B3772"/>
<dbReference type="HOGENOM" id="CLU_001201_0_2_9"/>
<dbReference type="UniPathway" id="UPA00053">
    <property type="reaction ID" value="UER00085"/>
</dbReference>
<dbReference type="Proteomes" id="UP000006744">
    <property type="component" value="Chromosome"/>
</dbReference>
<dbReference type="GO" id="GO:0005737">
    <property type="term" value="C:cytoplasm"/>
    <property type="evidence" value="ECO:0007669"/>
    <property type="project" value="UniProtKB-SubCell"/>
</dbReference>
<dbReference type="GO" id="GO:0003856">
    <property type="term" value="F:3-dehydroquinate synthase activity"/>
    <property type="evidence" value="ECO:0007669"/>
    <property type="project" value="UniProtKB-UniRule"/>
</dbReference>
<dbReference type="GO" id="GO:0046872">
    <property type="term" value="F:metal ion binding"/>
    <property type="evidence" value="ECO:0007669"/>
    <property type="project" value="UniProtKB-KW"/>
</dbReference>
<dbReference type="GO" id="GO:0000166">
    <property type="term" value="F:nucleotide binding"/>
    <property type="evidence" value="ECO:0007669"/>
    <property type="project" value="UniProtKB-KW"/>
</dbReference>
<dbReference type="GO" id="GO:0008652">
    <property type="term" value="P:amino acid biosynthetic process"/>
    <property type="evidence" value="ECO:0007669"/>
    <property type="project" value="UniProtKB-KW"/>
</dbReference>
<dbReference type="GO" id="GO:0009073">
    <property type="term" value="P:aromatic amino acid family biosynthetic process"/>
    <property type="evidence" value="ECO:0007669"/>
    <property type="project" value="UniProtKB-KW"/>
</dbReference>
<dbReference type="GO" id="GO:0009423">
    <property type="term" value="P:chorismate biosynthetic process"/>
    <property type="evidence" value="ECO:0007669"/>
    <property type="project" value="UniProtKB-UniRule"/>
</dbReference>
<dbReference type="CDD" id="cd08195">
    <property type="entry name" value="DHQS"/>
    <property type="match status" value="1"/>
</dbReference>
<dbReference type="FunFam" id="1.20.1090.10:FF:000008">
    <property type="entry name" value="3-dehydroquinate synthase"/>
    <property type="match status" value="1"/>
</dbReference>
<dbReference type="FunFam" id="3.40.50.1970:FF:000001">
    <property type="entry name" value="3-dehydroquinate synthase"/>
    <property type="match status" value="1"/>
</dbReference>
<dbReference type="Gene3D" id="3.40.50.1970">
    <property type="match status" value="1"/>
</dbReference>
<dbReference type="Gene3D" id="1.20.1090.10">
    <property type="entry name" value="Dehydroquinate synthase-like - alpha domain"/>
    <property type="match status" value="1"/>
</dbReference>
<dbReference type="HAMAP" id="MF_00110">
    <property type="entry name" value="DHQ_synthase"/>
    <property type="match status" value="1"/>
</dbReference>
<dbReference type="InterPro" id="IPR050071">
    <property type="entry name" value="Dehydroquinate_synthase"/>
</dbReference>
<dbReference type="InterPro" id="IPR016037">
    <property type="entry name" value="DHQ_synth_AroB"/>
</dbReference>
<dbReference type="InterPro" id="IPR030963">
    <property type="entry name" value="DHQ_synth_fam"/>
</dbReference>
<dbReference type="InterPro" id="IPR030960">
    <property type="entry name" value="DHQS/DOIS_N"/>
</dbReference>
<dbReference type="InterPro" id="IPR056179">
    <property type="entry name" value="DHQS_C"/>
</dbReference>
<dbReference type="NCBIfam" id="TIGR01357">
    <property type="entry name" value="aroB"/>
    <property type="match status" value="1"/>
</dbReference>
<dbReference type="PANTHER" id="PTHR43622">
    <property type="entry name" value="3-DEHYDROQUINATE SYNTHASE"/>
    <property type="match status" value="1"/>
</dbReference>
<dbReference type="PANTHER" id="PTHR43622:SF7">
    <property type="entry name" value="3-DEHYDROQUINATE SYNTHASE, CHLOROPLASTIC"/>
    <property type="match status" value="1"/>
</dbReference>
<dbReference type="Pfam" id="PF01761">
    <property type="entry name" value="DHQ_synthase"/>
    <property type="match status" value="1"/>
</dbReference>
<dbReference type="Pfam" id="PF24621">
    <property type="entry name" value="DHQS_C"/>
    <property type="match status" value="1"/>
</dbReference>
<dbReference type="PIRSF" id="PIRSF001455">
    <property type="entry name" value="DHQ_synth"/>
    <property type="match status" value="1"/>
</dbReference>
<dbReference type="SUPFAM" id="SSF56796">
    <property type="entry name" value="Dehydroquinate synthase-like"/>
    <property type="match status" value="1"/>
</dbReference>
<protein>
    <recommendedName>
        <fullName evidence="1">3-dehydroquinate synthase</fullName>
        <shortName evidence="1">DHQS</shortName>
        <ecNumber evidence="1">4.2.3.4</ecNumber>
    </recommendedName>
</protein>
<proteinExistence type="inferred from homology"/>
<sequence length="361" mass="40093">MGNIHIQTKSKEYDVHVGKEALSHLTMIVQNMQPAVSNVMIISDEAVASLHLQTVIDALQVEQDVFSFVVPSGEKEKSFENFYAAHTSALENKLDRNSLILALGGGMIGDLAGFVAASFMRGIRFVQVPTTLLAHDSAVGGKVAINHPLGKNMIGAFHQPEAVVYHTPFLQSLPKKEWRSGYAEVIKHALIGDVELYHWLKEEVQTLADLRDEKLIHILTKAIPVKANVVSQDETEKGVRAHLNFGHTLGHALEKELGYGNITHGDGVAVGMLFAIFLSEQVYKVNLAYEDMKQWFLKYGYPKMPRDLNVERLVQLMKQDKKANAGAIHMVLMQEYGVVNVVSISDETVHIALEAFQKDMV</sequence>
<name>AROB_BACC2</name>
<accession>B7IP95</accession>